<feature type="chain" id="PRO_0000328308" description="Meiotic nuclear division protein 1 homolog">
    <location>
        <begin position="1"/>
        <end position="221"/>
    </location>
</feature>
<feature type="coiled-coil region" evidence="2">
    <location>
        <begin position="89"/>
        <end position="146"/>
    </location>
</feature>
<dbReference type="EMBL" id="AAFI02000182">
    <property type="protein sequence ID" value="EAL61571.1"/>
    <property type="molecule type" value="Genomic_DNA"/>
</dbReference>
<dbReference type="RefSeq" id="XP_629976.1">
    <property type="nucleotide sequence ID" value="XM_629974.1"/>
</dbReference>
<dbReference type="SMR" id="Q54E86"/>
<dbReference type="FunCoup" id="Q54E86">
    <property type="interactions" value="133"/>
</dbReference>
<dbReference type="STRING" id="44689.Q54E86"/>
<dbReference type="PaxDb" id="44689-DDB0302477"/>
<dbReference type="EnsemblProtists" id="EAL61571">
    <property type="protein sequence ID" value="EAL61571"/>
    <property type="gene ID" value="DDB_G0291750"/>
</dbReference>
<dbReference type="GeneID" id="8628306"/>
<dbReference type="KEGG" id="ddi:DDB_G0291750"/>
<dbReference type="dictyBase" id="DDB_G0291750">
    <property type="gene designation" value="mnd1"/>
</dbReference>
<dbReference type="VEuPathDB" id="AmoebaDB:DDB_G0291750"/>
<dbReference type="eggNOG" id="KOG3433">
    <property type="taxonomic scope" value="Eukaryota"/>
</dbReference>
<dbReference type="HOGENOM" id="CLU_080628_3_1_1"/>
<dbReference type="InParanoid" id="Q54E86"/>
<dbReference type="OMA" id="VCYWAFP"/>
<dbReference type="PhylomeDB" id="Q54E86"/>
<dbReference type="PRO" id="PR:Q54E86"/>
<dbReference type="Proteomes" id="UP000002195">
    <property type="component" value="Chromosome 6"/>
</dbReference>
<dbReference type="GO" id="GO:0000794">
    <property type="term" value="C:condensed nuclear chromosome"/>
    <property type="evidence" value="ECO:0000250"/>
    <property type="project" value="dictyBase"/>
</dbReference>
<dbReference type="GO" id="GO:0003690">
    <property type="term" value="F:double-stranded DNA binding"/>
    <property type="evidence" value="ECO:0000250"/>
    <property type="project" value="dictyBase"/>
</dbReference>
<dbReference type="GO" id="GO:0007131">
    <property type="term" value="P:reciprocal meiotic recombination"/>
    <property type="evidence" value="ECO:0000250"/>
    <property type="project" value="dictyBase"/>
</dbReference>
<dbReference type="InterPro" id="IPR040661">
    <property type="entry name" value="LZ3wCH"/>
</dbReference>
<dbReference type="InterPro" id="IPR005647">
    <property type="entry name" value="Mnd1"/>
</dbReference>
<dbReference type="InterPro" id="IPR040453">
    <property type="entry name" value="Mnd1_HTH"/>
</dbReference>
<dbReference type="Pfam" id="PF18517">
    <property type="entry name" value="LZ3wCH"/>
    <property type="match status" value="1"/>
</dbReference>
<dbReference type="Pfam" id="PF03962">
    <property type="entry name" value="Mnd1"/>
    <property type="match status" value="1"/>
</dbReference>
<dbReference type="PIRSF" id="PIRSF026991">
    <property type="entry name" value="Mnd1"/>
    <property type="match status" value="1"/>
</dbReference>
<gene>
    <name type="primary">mnd1</name>
    <name type="ORF">DDB_G0291750</name>
</gene>
<protein>
    <recommendedName>
        <fullName>Meiotic nuclear division protein 1 homolog</fullName>
    </recommendedName>
</protein>
<proteinExistence type="inferred from homology"/>
<sequence>MATRRKGMSPEEKKEKLKEFFHSNSTIYSSKDVESEASKYTGMTQVQCKETLQMLIDDGVVNTDKMGSSNFYWSFPSFEFDSKKDKIIEQTKLLSETKERIQSETKKIEQLKSERVESETRTKNLEKLQTLKDDNKSFKEELLLYADSSLIDDKKRDIKIAIAAVNRYTDNISSLRQFCDSKYNIRPSDFDTSFGIKPDMDYLEEYNFNDTPQPVNKKKRK</sequence>
<keyword id="KW-0175">Coiled coil</keyword>
<keyword id="KW-0233">DNA recombination</keyword>
<keyword id="KW-0539">Nucleus</keyword>
<keyword id="KW-1185">Reference proteome</keyword>
<name>MND1_DICDI</name>
<reference key="1">
    <citation type="journal article" date="2005" name="Nature">
        <title>The genome of the social amoeba Dictyostelium discoideum.</title>
        <authorList>
            <person name="Eichinger L."/>
            <person name="Pachebat J.A."/>
            <person name="Gloeckner G."/>
            <person name="Rajandream M.A."/>
            <person name="Sucgang R."/>
            <person name="Berriman M."/>
            <person name="Song J."/>
            <person name="Olsen R."/>
            <person name="Szafranski K."/>
            <person name="Xu Q."/>
            <person name="Tunggal B."/>
            <person name="Kummerfeld S."/>
            <person name="Madera M."/>
            <person name="Konfortov B.A."/>
            <person name="Rivero F."/>
            <person name="Bankier A.T."/>
            <person name="Lehmann R."/>
            <person name="Hamlin N."/>
            <person name="Davies R."/>
            <person name="Gaudet P."/>
            <person name="Fey P."/>
            <person name="Pilcher K."/>
            <person name="Chen G."/>
            <person name="Saunders D."/>
            <person name="Sodergren E.J."/>
            <person name="Davis P."/>
            <person name="Kerhornou A."/>
            <person name="Nie X."/>
            <person name="Hall N."/>
            <person name="Anjard C."/>
            <person name="Hemphill L."/>
            <person name="Bason N."/>
            <person name="Farbrother P."/>
            <person name="Desany B."/>
            <person name="Just E."/>
            <person name="Morio T."/>
            <person name="Rost R."/>
            <person name="Churcher C.M."/>
            <person name="Cooper J."/>
            <person name="Haydock S."/>
            <person name="van Driessche N."/>
            <person name="Cronin A."/>
            <person name="Goodhead I."/>
            <person name="Muzny D.M."/>
            <person name="Mourier T."/>
            <person name="Pain A."/>
            <person name="Lu M."/>
            <person name="Harper D."/>
            <person name="Lindsay R."/>
            <person name="Hauser H."/>
            <person name="James K.D."/>
            <person name="Quiles M."/>
            <person name="Madan Babu M."/>
            <person name="Saito T."/>
            <person name="Buchrieser C."/>
            <person name="Wardroper A."/>
            <person name="Felder M."/>
            <person name="Thangavelu M."/>
            <person name="Johnson D."/>
            <person name="Knights A."/>
            <person name="Loulseged H."/>
            <person name="Mungall K.L."/>
            <person name="Oliver K."/>
            <person name="Price C."/>
            <person name="Quail M.A."/>
            <person name="Urushihara H."/>
            <person name="Hernandez J."/>
            <person name="Rabbinowitsch E."/>
            <person name="Steffen D."/>
            <person name="Sanders M."/>
            <person name="Ma J."/>
            <person name="Kohara Y."/>
            <person name="Sharp S."/>
            <person name="Simmonds M.N."/>
            <person name="Spiegler S."/>
            <person name="Tivey A."/>
            <person name="Sugano S."/>
            <person name="White B."/>
            <person name="Walker D."/>
            <person name="Woodward J.R."/>
            <person name="Winckler T."/>
            <person name="Tanaka Y."/>
            <person name="Shaulsky G."/>
            <person name="Schleicher M."/>
            <person name="Weinstock G.M."/>
            <person name="Rosenthal A."/>
            <person name="Cox E.C."/>
            <person name="Chisholm R.L."/>
            <person name="Gibbs R.A."/>
            <person name="Loomis W.F."/>
            <person name="Platzer M."/>
            <person name="Kay R.R."/>
            <person name="Williams J.G."/>
            <person name="Dear P.H."/>
            <person name="Noegel A.A."/>
            <person name="Barrell B.G."/>
            <person name="Kuspa A."/>
        </authorList>
    </citation>
    <scope>NUCLEOTIDE SEQUENCE [LARGE SCALE GENOMIC DNA]</scope>
    <source>
        <strain>AX4</strain>
    </source>
</reference>
<accession>Q54E86</accession>
<evidence type="ECO:0000250" key="1"/>
<evidence type="ECO:0000255" key="2"/>
<evidence type="ECO:0000305" key="3"/>
<organism>
    <name type="scientific">Dictyostelium discoideum</name>
    <name type="common">Social amoeba</name>
    <dbReference type="NCBI Taxonomy" id="44689"/>
    <lineage>
        <taxon>Eukaryota</taxon>
        <taxon>Amoebozoa</taxon>
        <taxon>Evosea</taxon>
        <taxon>Eumycetozoa</taxon>
        <taxon>Dictyostelia</taxon>
        <taxon>Dictyosteliales</taxon>
        <taxon>Dictyosteliaceae</taxon>
        <taxon>Dictyostelium</taxon>
    </lineage>
</organism>
<comment type="function">
    <text evidence="1">Required for proper homologous chromosome pairing and efficient cross-over and intragenic recombination.</text>
</comment>
<comment type="subcellular location">
    <subcellularLocation>
        <location evidence="3">Nucleus</location>
    </subcellularLocation>
</comment>
<comment type="similarity">
    <text evidence="3">Belongs to the MND1 family.</text>
</comment>